<gene>
    <name evidence="1" type="primary">lipA</name>
    <name type="ordered locus">PA3996</name>
</gene>
<comment type="function">
    <text evidence="1">Catalyzes the radical-mediated insertion of two sulfur atoms into the C-6 and C-8 positions of the octanoyl moiety bound to the lipoyl domains of lipoate-dependent enzymes, thereby converting the octanoylated domains into lipoylated derivatives.</text>
</comment>
<comment type="catalytic activity">
    <reaction evidence="1">
        <text>[[Fe-S] cluster scaffold protein carrying a second [4Fe-4S](2+) cluster] + N(6)-octanoyl-L-lysyl-[protein] + 2 oxidized [2Fe-2S]-[ferredoxin] + 2 S-adenosyl-L-methionine + 4 H(+) = [[Fe-S] cluster scaffold protein] + N(6)-[(R)-dihydrolipoyl]-L-lysyl-[protein] + 4 Fe(3+) + 2 hydrogen sulfide + 2 5'-deoxyadenosine + 2 L-methionine + 2 reduced [2Fe-2S]-[ferredoxin]</text>
        <dbReference type="Rhea" id="RHEA:16585"/>
        <dbReference type="Rhea" id="RHEA-COMP:9928"/>
        <dbReference type="Rhea" id="RHEA-COMP:10000"/>
        <dbReference type="Rhea" id="RHEA-COMP:10001"/>
        <dbReference type="Rhea" id="RHEA-COMP:10475"/>
        <dbReference type="Rhea" id="RHEA-COMP:14568"/>
        <dbReference type="Rhea" id="RHEA-COMP:14569"/>
        <dbReference type="ChEBI" id="CHEBI:15378"/>
        <dbReference type="ChEBI" id="CHEBI:17319"/>
        <dbReference type="ChEBI" id="CHEBI:29034"/>
        <dbReference type="ChEBI" id="CHEBI:29919"/>
        <dbReference type="ChEBI" id="CHEBI:33722"/>
        <dbReference type="ChEBI" id="CHEBI:33737"/>
        <dbReference type="ChEBI" id="CHEBI:33738"/>
        <dbReference type="ChEBI" id="CHEBI:57844"/>
        <dbReference type="ChEBI" id="CHEBI:59789"/>
        <dbReference type="ChEBI" id="CHEBI:78809"/>
        <dbReference type="ChEBI" id="CHEBI:83100"/>
        <dbReference type="EC" id="2.8.1.8"/>
    </reaction>
</comment>
<comment type="cofactor">
    <cofactor evidence="1">
        <name>[4Fe-4S] cluster</name>
        <dbReference type="ChEBI" id="CHEBI:49883"/>
    </cofactor>
    <text evidence="1">Binds 2 [4Fe-4S] clusters per subunit. One cluster is coordinated with 3 cysteines and an exchangeable S-adenosyl-L-methionine.</text>
</comment>
<comment type="pathway">
    <text evidence="1">Protein modification; protein lipoylation via endogenous pathway; protein N(6)-(lipoyl)lysine from octanoyl-[acyl-carrier-protein]: step 2/2.</text>
</comment>
<comment type="subcellular location">
    <subcellularLocation>
        <location evidence="1">Cytoplasm</location>
    </subcellularLocation>
</comment>
<comment type="similarity">
    <text evidence="1">Belongs to the radical SAM superfamily. Lipoyl synthase family.</text>
</comment>
<sequence length="327" mass="36733">MSTVVEKSGEAKPGKVEVGVKLRGAEKVARIPVKIIPTEELPKKPDWIRVRIPVSPEVDRIKQLLRKHKLHSVCEEASCPNLGECFSGGTATFMIMGDICTRRCPFCDVGHGRPKPLDVDEPTNLAIAIADLRLKYVVITSVDRDDLRDGGAQHFADCLREIRKLSPGIQLETLVPDYRGRMDIALEITANEPPDVFNHNLETVPRLYRSSRPGSDFEWSLDLLQKFKQMVPHVPTKSGLMLGLGETDDEVIEVMQRMREHDIDMLTLGQYLQPSRNHLPVQRFVHPDTFAWFAEEGEKMGFKNVASGPLVRSSYHADQQAHGNKIG</sequence>
<evidence type="ECO:0000255" key="1">
    <source>
        <dbReference type="HAMAP-Rule" id="MF_00206"/>
    </source>
</evidence>
<evidence type="ECO:0000255" key="2">
    <source>
        <dbReference type="PROSITE-ProRule" id="PRU01266"/>
    </source>
</evidence>
<reference key="1">
    <citation type="journal article" date="2000" name="Nature">
        <title>Complete genome sequence of Pseudomonas aeruginosa PAO1, an opportunistic pathogen.</title>
        <authorList>
            <person name="Stover C.K."/>
            <person name="Pham X.-Q.T."/>
            <person name="Erwin A.L."/>
            <person name="Mizoguchi S.D."/>
            <person name="Warrener P."/>
            <person name="Hickey M.J."/>
            <person name="Brinkman F.S.L."/>
            <person name="Hufnagle W.O."/>
            <person name="Kowalik D.J."/>
            <person name="Lagrou M."/>
            <person name="Garber R.L."/>
            <person name="Goltry L."/>
            <person name="Tolentino E."/>
            <person name="Westbrock-Wadman S."/>
            <person name="Yuan Y."/>
            <person name="Brody L.L."/>
            <person name="Coulter S.N."/>
            <person name="Folger K.R."/>
            <person name="Kas A."/>
            <person name="Larbig K."/>
            <person name="Lim R.M."/>
            <person name="Smith K.A."/>
            <person name="Spencer D.H."/>
            <person name="Wong G.K.-S."/>
            <person name="Wu Z."/>
            <person name="Paulsen I.T."/>
            <person name="Reizer J."/>
            <person name="Saier M.H. Jr."/>
            <person name="Hancock R.E.W."/>
            <person name="Lory S."/>
            <person name="Olson M.V."/>
        </authorList>
    </citation>
    <scope>NUCLEOTIDE SEQUENCE [LARGE SCALE GENOMIC DNA]</scope>
    <source>
        <strain>ATCC 15692 / DSM 22644 / CIP 104116 / JCM 14847 / LMG 12228 / 1C / PRS 101 / PAO1</strain>
    </source>
</reference>
<accession>Q9HX25</accession>
<organism>
    <name type="scientific">Pseudomonas aeruginosa (strain ATCC 15692 / DSM 22644 / CIP 104116 / JCM 14847 / LMG 12228 / 1C / PRS 101 / PAO1)</name>
    <dbReference type="NCBI Taxonomy" id="208964"/>
    <lineage>
        <taxon>Bacteria</taxon>
        <taxon>Pseudomonadati</taxon>
        <taxon>Pseudomonadota</taxon>
        <taxon>Gammaproteobacteria</taxon>
        <taxon>Pseudomonadales</taxon>
        <taxon>Pseudomonadaceae</taxon>
        <taxon>Pseudomonas</taxon>
    </lineage>
</organism>
<keyword id="KW-0004">4Fe-4S</keyword>
<keyword id="KW-0963">Cytoplasm</keyword>
<keyword id="KW-0408">Iron</keyword>
<keyword id="KW-0411">Iron-sulfur</keyword>
<keyword id="KW-0479">Metal-binding</keyword>
<keyword id="KW-1185">Reference proteome</keyword>
<keyword id="KW-0949">S-adenosyl-L-methionine</keyword>
<keyword id="KW-0808">Transferase</keyword>
<protein>
    <recommendedName>
        <fullName evidence="1">Lipoyl synthase</fullName>
        <ecNumber evidence="1">2.8.1.8</ecNumber>
    </recommendedName>
    <alternativeName>
        <fullName evidence="1">Lip-syn</fullName>
        <shortName evidence="1">LS</shortName>
    </alternativeName>
    <alternativeName>
        <fullName evidence="1">Lipoate synthase</fullName>
    </alternativeName>
    <alternativeName>
        <fullName evidence="1">Lipoic acid synthase</fullName>
    </alternativeName>
    <alternativeName>
        <fullName evidence="1">Sulfur insertion protein LipA</fullName>
    </alternativeName>
</protein>
<proteinExistence type="inferred from homology"/>
<name>LIPA_PSEAE</name>
<dbReference type="EC" id="2.8.1.8" evidence="1"/>
<dbReference type="EMBL" id="AE004091">
    <property type="protein sequence ID" value="AAG07383.1"/>
    <property type="molecule type" value="Genomic_DNA"/>
</dbReference>
<dbReference type="PIR" id="H83145">
    <property type="entry name" value="H83145"/>
</dbReference>
<dbReference type="RefSeq" id="WP_003119196.1">
    <property type="nucleotide sequence ID" value="NZ_QZGE01000038.1"/>
</dbReference>
<dbReference type="SMR" id="Q9HX25"/>
<dbReference type="FunCoup" id="Q9HX25">
    <property type="interactions" value="735"/>
</dbReference>
<dbReference type="STRING" id="208964.PA3996"/>
<dbReference type="PaxDb" id="208964-PA3996"/>
<dbReference type="DNASU" id="878931"/>
<dbReference type="KEGG" id="pae:PA3996"/>
<dbReference type="PATRIC" id="fig|208964.12.peg.4188"/>
<dbReference type="PseudoCAP" id="PA3996"/>
<dbReference type="HOGENOM" id="CLU_033144_2_1_6"/>
<dbReference type="InParanoid" id="Q9HX25"/>
<dbReference type="OrthoDB" id="9787898at2"/>
<dbReference type="PhylomeDB" id="Q9HX25"/>
<dbReference type="BioCyc" id="PAER208964:G1FZ6-4069-MONOMER"/>
<dbReference type="UniPathway" id="UPA00538">
    <property type="reaction ID" value="UER00593"/>
</dbReference>
<dbReference type="Proteomes" id="UP000002438">
    <property type="component" value="Chromosome"/>
</dbReference>
<dbReference type="GO" id="GO:0005737">
    <property type="term" value="C:cytoplasm"/>
    <property type="evidence" value="ECO:0007669"/>
    <property type="project" value="UniProtKB-SubCell"/>
</dbReference>
<dbReference type="GO" id="GO:0051539">
    <property type="term" value="F:4 iron, 4 sulfur cluster binding"/>
    <property type="evidence" value="ECO:0007669"/>
    <property type="project" value="UniProtKB-UniRule"/>
</dbReference>
<dbReference type="GO" id="GO:0016992">
    <property type="term" value="F:lipoate synthase activity"/>
    <property type="evidence" value="ECO:0007669"/>
    <property type="project" value="UniProtKB-UniRule"/>
</dbReference>
<dbReference type="GO" id="GO:0046872">
    <property type="term" value="F:metal ion binding"/>
    <property type="evidence" value="ECO:0007669"/>
    <property type="project" value="UniProtKB-KW"/>
</dbReference>
<dbReference type="CDD" id="cd01335">
    <property type="entry name" value="Radical_SAM"/>
    <property type="match status" value="1"/>
</dbReference>
<dbReference type="FunFam" id="3.20.20.70:FF:000023">
    <property type="entry name" value="Lipoyl synthase"/>
    <property type="match status" value="1"/>
</dbReference>
<dbReference type="Gene3D" id="3.20.20.70">
    <property type="entry name" value="Aldolase class I"/>
    <property type="match status" value="1"/>
</dbReference>
<dbReference type="HAMAP" id="MF_00206">
    <property type="entry name" value="Lipoyl_synth"/>
    <property type="match status" value="1"/>
</dbReference>
<dbReference type="InterPro" id="IPR013785">
    <property type="entry name" value="Aldolase_TIM"/>
</dbReference>
<dbReference type="InterPro" id="IPR006638">
    <property type="entry name" value="Elp3/MiaA/NifB-like_rSAM"/>
</dbReference>
<dbReference type="InterPro" id="IPR031691">
    <property type="entry name" value="LIAS_N"/>
</dbReference>
<dbReference type="InterPro" id="IPR003698">
    <property type="entry name" value="Lipoyl_synth"/>
</dbReference>
<dbReference type="InterPro" id="IPR007197">
    <property type="entry name" value="rSAM"/>
</dbReference>
<dbReference type="NCBIfam" id="TIGR00510">
    <property type="entry name" value="lipA"/>
    <property type="match status" value="1"/>
</dbReference>
<dbReference type="NCBIfam" id="NF004019">
    <property type="entry name" value="PRK05481.1"/>
    <property type="match status" value="1"/>
</dbReference>
<dbReference type="NCBIfam" id="NF009544">
    <property type="entry name" value="PRK12928.1"/>
    <property type="match status" value="1"/>
</dbReference>
<dbReference type="PANTHER" id="PTHR10949">
    <property type="entry name" value="LIPOYL SYNTHASE"/>
    <property type="match status" value="1"/>
</dbReference>
<dbReference type="PANTHER" id="PTHR10949:SF0">
    <property type="entry name" value="LIPOYL SYNTHASE, MITOCHONDRIAL"/>
    <property type="match status" value="1"/>
</dbReference>
<dbReference type="Pfam" id="PF16881">
    <property type="entry name" value="LIAS_N"/>
    <property type="match status" value="1"/>
</dbReference>
<dbReference type="Pfam" id="PF04055">
    <property type="entry name" value="Radical_SAM"/>
    <property type="match status" value="1"/>
</dbReference>
<dbReference type="PIRSF" id="PIRSF005963">
    <property type="entry name" value="Lipoyl_synth"/>
    <property type="match status" value="1"/>
</dbReference>
<dbReference type="SFLD" id="SFLDF00271">
    <property type="entry name" value="lipoyl_synthase"/>
    <property type="match status" value="1"/>
</dbReference>
<dbReference type="SFLD" id="SFLDG01058">
    <property type="entry name" value="lipoyl_synthase_like"/>
    <property type="match status" value="1"/>
</dbReference>
<dbReference type="SMART" id="SM00729">
    <property type="entry name" value="Elp3"/>
    <property type="match status" value="1"/>
</dbReference>
<dbReference type="SUPFAM" id="SSF102114">
    <property type="entry name" value="Radical SAM enzymes"/>
    <property type="match status" value="1"/>
</dbReference>
<dbReference type="PROSITE" id="PS51918">
    <property type="entry name" value="RADICAL_SAM"/>
    <property type="match status" value="1"/>
</dbReference>
<feature type="chain" id="PRO_0000102342" description="Lipoyl synthase">
    <location>
        <begin position="1"/>
        <end position="327"/>
    </location>
</feature>
<feature type="domain" description="Radical SAM core" evidence="2">
    <location>
        <begin position="86"/>
        <end position="303"/>
    </location>
</feature>
<feature type="binding site" evidence="1">
    <location>
        <position position="74"/>
    </location>
    <ligand>
        <name>[4Fe-4S] cluster</name>
        <dbReference type="ChEBI" id="CHEBI:49883"/>
        <label>1</label>
    </ligand>
</feature>
<feature type="binding site" evidence="1">
    <location>
        <position position="79"/>
    </location>
    <ligand>
        <name>[4Fe-4S] cluster</name>
        <dbReference type="ChEBI" id="CHEBI:49883"/>
        <label>1</label>
    </ligand>
</feature>
<feature type="binding site" evidence="1">
    <location>
        <position position="85"/>
    </location>
    <ligand>
        <name>[4Fe-4S] cluster</name>
        <dbReference type="ChEBI" id="CHEBI:49883"/>
        <label>1</label>
    </ligand>
</feature>
<feature type="binding site" evidence="1">
    <location>
        <position position="100"/>
    </location>
    <ligand>
        <name>[4Fe-4S] cluster</name>
        <dbReference type="ChEBI" id="CHEBI:49883"/>
        <label>2</label>
        <note>4Fe-4S-S-AdoMet</note>
    </ligand>
</feature>
<feature type="binding site" evidence="1">
    <location>
        <position position="104"/>
    </location>
    <ligand>
        <name>[4Fe-4S] cluster</name>
        <dbReference type="ChEBI" id="CHEBI:49883"/>
        <label>2</label>
        <note>4Fe-4S-S-AdoMet</note>
    </ligand>
</feature>
<feature type="binding site" evidence="1">
    <location>
        <position position="107"/>
    </location>
    <ligand>
        <name>[4Fe-4S] cluster</name>
        <dbReference type="ChEBI" id="CHEBI:49883"/>
        <label>2</label>
        <note>4Fe-4S-S-AdoMet</note>
    </ligand>
</feature>
<feature type="binding site" evidence="1">
    <location>
        <position position="314"/>
    </location>
    <ligand>
        <name>[4Fe-4S] cluster</name>
        <dbReference type="ChEBI" id="CHEBI:49883"/>
        <label>1</label>
    </ligand>
</feature>